<sequence length="265" mass="29993">MIKWPWKSNETAPDALLPWDEALAIPVLASLSADEQSRLVQLADRFLQQKRLVPLQGFELDELKSARIALLFCLPVLELGIEWLDGFHEVLIYPAPFVVDDEWEDDIGLVHNQRVVQSGQSWQQGPIILNWLDIQDSFDASGFNLIVHEVAHKLDTRNGDRASGVPFIPLREVAGWEHDLHAAMNNIQDEIDLVGESAASIDAYAATDPAECFAVLSEYFFSAPELFAPRFPALWQRFCHFYQQDPMQRLRENAGYDGNASPQVH</sequence>
<organism>
    <name type="scientific">Enterobacter sp. (strain 638)</name>
    <dbReference type="NCBI Taxonomy" id="399742"/>
    <lineage>
        <taxon>Bacteria</taxon>
        <taxon>Pseudomonadati</taxon>
        <taxon>Pseudomonadota</taxon>
        <taxon>Gammaproteobacteria</taxon>
        <taxon>Enterobacterales</taxon>
        <taxon>Enterobacteriaceae</taxon>
        <taxon>Enterobacter</taxon>
    </lineage>
</organism>
<comment type="function">
    <text evidence="1">Involved in the modulation of the activity of the glucose-phosphotransferase system (glucose-PTS). Interacts with the transcriptional repressor Mlc, preventing its interaction with DNA and leading to the modulation of expression of genes regulated by Mlc, including ptsG, which encodes the PTS system glucose-specific EIICB component.</text>
</comment>
<comment type="function">
    <text evidence="1">Shows zinc-dependent metallopeptidase activity.</text>
</comment>
<comment type="cofactor">
    <cofactor evidence="1">
        <name>Zn(2+)</name>
        <dbReference type="ChEBI" id="CHEBI:29105"/>
    </cofactor>
    <text evidence="1">Binds 1 zinc ion per subunit.</text>
</comment>
<comment type="subunit">
    <text evidence="1">Interacts with Mlc.</text>
</comment>
<comment type="subcellular location">
    <subcellularLocation>
        <location evidence="1">Cytoplasm</location>
    </subcellularLocation>
</comment>
<comment type="similarity">
    <text evidence="1">Belongs to the MtfA family.</text>
</comment>
<comment type="sequence caution" evidence="2">
    <conflict type="erroneous initiation">
        <sequence resource="EMBL-CDS" id="ABP61230"/>
    </conflict>
</comment>
<accession>A4WC00</accession>
<protein>
    <recommendedName>
        <fullName evidence="1">Mlc titration factor A</fullName>
    </recommendedName>
    <alternativeName>
        <fullName evidence="1">Probable zinc metallopeptidase MtfA</fullName>
        <ecNumber evidence="1">3.4.11.-</ecNumber>
    </alternativeName>
</protein>
<gene>
    <name evidence="1" type="primary">mtfA</name>
    <name type="ordered locus">Ent638_2561</name>
</gene>
<keyword id="KW-0031">Aminopeptidase</keyword>
<keyword id="KW-0963">Cytoplasm</keyword>
<keyword id="KW-0378">Hydrolase</keyword>
<keyword id="KW-0479">Metal-binding</keyword>
<keyword id="KW-0482">Metalloprotease</keyword>
<keyword id="KW-0645">Protease</keyword>
<keyword id="KW-0862">Zinc</keyword>
<evidence type="ECO:0000255" key="1">
    <source>
        <dbReference type="HAMAP-Rule" id="MF_01593"/>
    </source>
</evidence>
<evidence type="ECO:0000305" key="2"/>
<feature type="chain" id="PRO_0000316308" description="Mlc titration factor A">
    <location>
        <begin position="1"/>
        <end position="265"/>
    </location>
</feature>
<feature type="binding site" evidence="1">
    <location>
        <position position="111"/>
    </location>
    <ligand>
        <name>Zn(2+)</name>
        <dbReference type="ChEBI" id="CHEBI:29105"/>
    </ligand>
</feature>
<feature type="binding site" evidence="1">
    <location>
        <position position="148"/>
    </location>
    <ligand>
        <name>Zn(2+)</name>
        <dbReference type="ChEBI" id="CHEBI:29105"/>
    </ligand>
</feature>
<feature type="binding site" evidence="1">
    <location>
        <position position="152"/>
    </location>
    <ligand>
        <name>Zn(2+)</name>
        <dbReference type="ChEBI" id="CHEBI:29105"/>
    </ligand>
</feature>
<feature type="binding site" evidence="1">
    <location>
        <position position="211"/>
    </location>
    <ligand>
        <name>Zn(2+)</name>
        <dbReference type="ChEBI" id="CHEBI:29105"/>
    </ligand>
</feature>
<name>MTFA_ENT38</name>
<proteinExistence type="inferred from homology"/>
<reference key="1">
    <citation type="journal article" date="2010" name="PLoS Genet.">
        <title>Genome sequence of the plant growth promoting endophytic bacterium Enterobacter sp. 638.</title>
        <authorList>
            <person name="Taghavi S."/>
            <person name="van der Lelie D."/>
            <person name="Hoffman A."/>
            <person name="Zhang Y.B."/>
            <person name="Walla M.D."/>
            <person name="Vangronsveld J."/>
            <person name="Newman L."/>
            <person name="Monchy S."/>
        </authorList>
    </citation>
    <scope>NUCLEOTIDE SEQUENCE [LARGE SCALE GENOMIC DNA]</scope>
    <source>
        <strain>638</strain>
    </source>
</reference>
<dbReference type="EC" id="3.4.11.-" evidence="1"/>
<dbReference type="EMBL" id="CP000653">
    <property type="protein sequence ID" value="ABP61230.1"/>
    <property type="status" value="ALT_INIT"/>
    <property type="molecule type" value="Genomic_DNA"/>
</dbReference>
<dbReference type="RefSeq" id="WP_041689685.1">
    <property type="nucleotide sequence ID" value="NC_009436.1"/>
</dbReference>
<dbReference type="SMR" id="A4WC00"/>
<dbReference type="STRING" id="399742.Ent638_2561"/>
<dbReference type="MEROPS" id="M90.001"/>
<dbReference type="KEGG" id="ent:Ent638_2561"/>
<dbReference type="eggNOG" id="COG3228">
    <property type="taxonomic scope" value="Bacteria"/>
</dbReference>
<dbReference type="HOGENOM" id="CLU_063037_0_1_6"/>
<dbReference type="OrthoDB" id="9786424at2"/>
<dbReference type="Proteomes" id="UP000000230">
    <property type="component" value="Chromosome"/>
</dbReference>
<dbReference type="GO" id="GO:0005829">
    <property type="term" value="C:cytosol"/>
    <property type="evidence" value="ECO:0007669"/>
    <property type="project" value="TreeGrafter"/>
</dbReference>
<dbReference type="GO" id="GO:0004177">
    <property type="term" value="F:aminopeptidase activity"/>
    <property type="evidence" value="ECO:0007669"/>
    <property type="project" value="UniProtKB-UniRule"/>
</dbReference>
<dbReference type="GO" id="GO:0008237">
    <property type="term" value="F:metallopeptidase activity"/>
    <property type="evidence" value="ECO:0007669"/>
    <property type="project" value="UniProtKB-UniRule"/>
</dbReference>
<dbReference type="GO" id="GO:0008270">
    <property type="term" value="F:zinc ion binding"/>
    <property type="evidence" value="ECO:0007669"/>
    <property type="project" value="UniProtKB-UniRule"/>
</dbReference>
<dbReference type="GO" id="GO:0006508">
    <property type="term" value="P:proteolysis"/>
    <property type="evidence" value="ECO:0007669"/>
    <property type="project" value="UniProtKB-KW"/>
</dbReference>
<dbReference type="CDD" id="cd20169">
    <property type="entry name" value="Peptidase_M90_mtfA"/>
    <property type="match status" value="1"/>
</dbReference>
<dbReference type="FunFam" id="1.10.472.150:FF:000001">
    <property type="entry name" value="Protein MtfA"/>
    <property type="match status" value="1"/>
</dbReference>
<dbReference type="FunFam" id="3.40.390.10:FF:000012">
    <property type="entry name" value="Protein MtfA"/>
    <property type="match status" value="1"/>
</dbReference>
<dbReference type="Gene3D" id="3.40.390.10">
    <property type="entry name" value="Collagenase (Catalytic Domain)"/>
    <property type="match status" value="1"/>
</dbReference>
<dbReference type="Gene3D" id="1.10.472.150">
    <property type="entry name" value="Glucose-regulated metallo-peptidase M90, N-terminal domain"/>
    <property type="match status" value="1"/>
</dbReference>
<dbReference type="HAMAP" id="MF_01593">
    <property type="entry name" value="MtfA"/>
    <property type="match status" value="1"/>
</dbReference>
<dbReference type="InterPro" id="IPR024079">
    <property type="entry name" value="MetalloPept_cat_dom_sf"/>
</dbReference>
<dbReference type="InterPro" id="IPR057256">
    <property type="entry name" value="MtfA_enterob"/>
</dbReference>
<dbReference type="InterPro" id="IPR010384">
    <property type="entry name" value="MtfA_fam"/>
</dbReference>
<dbReference type="InterPro" id="IPR042252">
    <property type="entry name" value="MtfA_N"/>
</dbReference>
<dbReference type="NCBIfam" id="NF011939">
    <property type="entry name" value="PRK15410.1"/>
    <property type="match status" value="1"/>
</dbReference>
<dbReference type="PANTHER" id="PTHR30164">
    <property type="entry name" value="MTFA PEPTIDASE"/>
    <property type="match status" value="1"/>
</dbReference>
<dbReference type="PANTHER" id="PTHR30164:SF2">
    <property type="entry name" value="PROTEIN MTFA"/>
    <property type="match status" value="1"/>
</dbReference>
<dbReference type="Pfam" id="PF06167">
    <property type="entry name" value="Peptidase_M90"/>
    <property type="match status" value="1"/>
</dbReference>
<dbReference type="SUPFAM" id="SSF55486">
    <property type="entry name" value="Metalloproteases ('zincins'), catalytic domain"/>
    <property type="match status" value="1"/>
</dbReference>